<evidence type="ECO:0000250" key="1">
    <source>
        <dbReference type="UniProtKB" id="Q13868"/>
    </source>
</evidence>
<evidence type="ECO:0000256" key="2">
    <source>
        <dbReference type="SAM" id="MobiDB-lite"/>
    </source>
</evidence>
<evidence type="ECO:0000305" key="3"/>
<organism>
    <name type="scientific">Mus musculus</name>
    <name type="common">Mouse</name>
    <dbReference type="NCBI Taxonomy" id="10090"/>
    <lineage>
        <taxon>Eukaryota</taxon>
        <taxon>Metazoa</taxon>
        <taxon>Chordata</taxon>
        <taxon>Craniata</taxon>
        <taxon>Vertebrata</taxon>
        <taxon>Euteleostomi</taxon>
        <taxon>Mammalia</taxon>
        <taxon>Eutheria</taxon>
        <taxon>Euarchontoglires</taxon>
        <taxon>Glires</taxon>
        <taxon>Rodentia</taxon>
        <taxon>Myomorpha</taxon>
        <taxon>Muroidea</taxon>
        <taxon>Muridae</taxon>
        <taxon>Murinae</taxon>
        <taxon>Mus</taxon>
        <taxon>Mus</taxon>
    </lineage>
</organism>
<feature type="chain" id="PRO_0000087130" description="Exosome complex component RRP4">
    <location>
        <begin position="1"/>
        <end position="293"/>
    </location>
</feature>
<feature type="domain" description="S1 motif">
    <location>
        <begin position="79"/>
        <end position="159"/>
    </location>
</feature>
<feature type="region of interest" description="Disordered" evidence="2">
    <location>
        <begin position="1"/>
        <end position="20"/>
    </location>
</feature>
<feature type="modified residue" description="Phosphoserine" evidence="1">
    <location>
        <position position="124"/>
    </location>
</feature>
<proteinExistence type="evidence at protein level"/>
<comment type="function">
    <text evidence="1">Non-catalytic component of the RNA exosome complex which has 3'-&gt;5' exoribonuclease activity and participates in a multitude of cellular RNA processing and degradation events. In the nucleus, the RNA exosome complex is involved in proper maturation of stable RNA species such as rRNA, snRNA and snoRNA, in the elimination of RNA processing by-products and non-coding 'pervasive' transcripts, such as antisense RNA species and promoter-upstream transcripts (PROMPTs), and of mRNAs with processing defects, thereby limiting or excluding their export to the cytoplasm. The RNA exosome may be involved in Ig class switch recombination (CSR) and/or Ig variable region somatic hypermutation (SHM) by targeting AICDA deamination activity to transcribed dsDNA substrates. In the cytoplasm, the RNA exosome complex is involved in general mRNA turnover and specifically degrades inherently unstable mRNAs containing AU-rich elements (AREs) within their 3' untranslated regions, and in RNA surveillance pathways, preventing translation of aberrant mRNAs. It seems to be involved in degradation of histone mRNA. The catalytic inactive RNA exosome core complex of 9 subunits (Exo-9) is proposed to play a pivotal role in the binding and presentation of RNA for ribonucleolysis, and to serve as a scaffold for the association with catalytic subunits and accessory proteins or complexes. EXOSC2 as peripheral part of the Exo-9 complex stabilizes the hexameric ring of RNase PH-domain subunits through contacts with EXOSC4 and EXOSC7 (By similarity).</text>
</comment>
<comment type="subunit">
    <text evidence="1">Component of the RNA exosome core complex (Exo-9), composed of EXOSC1, EXOSC2, EXOSC3, EXOSC4, EXOSC5, EXOSC6, EXOSC7, EXOSC8 and EXOSC9; within the complex interacts with EXOSC4 and EXOSC7 (By similarity). The catalytically inactive RNA exosome core complex (Exo-9) associates with the catalytic subunit EXOSC10/RRP6 (By similarity). Exo-9 may associate with DIS3 to form the nucleolar exosome complex, or DIS3L to form the cytoplasmic exosome complex (By similarity). Exo-9 is formed by a hexameric base ring consisting of the heterodimers EXOSC4-EXOSC9, EXOSC5-EXOSC8 and EXOSC6-EXOSC7, and a cap ring consisting of EXOSC1, EXOSC2 and EXOSC3 (By similarity). The RNA exosome complex associates with cofactors C1D/RRP47, MPHOSPH6/MPP6 and MTREX/MTR4 (By similarity). Interacts with GTPBP1 (By similarity). Interacts with ZFP36L1 (via N-terminus) (By similarity).</text>
</comment>
<comment type="subcellular location">
    <subcellularLocation>
        <location evidence="1">Cytoplasm</location>
    </subcellularLocation>
    <subcellularLocation>
        <location evidence="1">Nucleus</location>
        <location evidence="1">Nucleolus</location>
    </subcellularLocation>
    <subcellularLocation>
        <location evidence="1">Nucleus</location>
    </subcellularLocation>
</comment>
<comment type="similarity">
    <text evidence="3">Belongs to the RRP4 family.</text>
</comment>
<name>EXOS2_MOUSE</name>
<keyword id="KW-0963">Cytoplasm</keyword>
<keyword id="KW-0271">Exosome</keyword>
<keyword id="KW-0539">Nucleus</keyword>
<keyword id="KW-0597">Phosphoprotein</keyword>
<keyword id="KW-1185">Reference proteome</keyword>
<keyword id="KW-0694">RNA-binding</keyword>
<keyword id="KW-0698">rRNA processing</keyword>
<reference key="1">
    <citation type="journal article" date="2004" name="Genome Res.">
        <title>The status, quality, and expansion of the NIH full-length cDNA project: the Mammalian Gene Collection (MGC).</title>
        <authorList>
            <consortium name="The MGC Project Team"/>
        </authorList>
    </citation>
    <scope>NUCLEOTIDE SEQUENCE [LARGE SCALE MRNA]</scope>
    <source>
        <strain>FVB/N</strain>
        <tissue>Mammary tumor</tissue>
    </source>
</reference>
<reference key="2">
    <citation type="journal article" date="2010" name="Cell">
        <title>A tissue-specific atlas of mouse protein phosphorylation and expression.</title>
        <authorList>
            <person name="Huttlin E.L."/>
            <person name="Jedrychowski M.P."/>
            <person name="Elias J.E."/>
            <person name="Goswami T."/>
            <person name="Rad R."/>
            <person name="Beausoleil S.A."/>
            <person name="Villen J."/>
            <person name="Haas W."/>
            <person name="Sowa M.E."/>
            <person name="Gygi S.P."/>
        </authorList>
    </citation>
    <scope>IDENTIFICATION BY MASS SPECTROMETRY [LARGE SCALE ANALYSIS]</scope>
    <source>
        <tissue>Brain</tissue>
        <tissue>Kidney</tissue>
        <tissue>Liver</tissue>
        <tissue>Spleen</tissue>
        <tissue>Testis</tissue>
    </source>
</reference>
<gene>
    <name type="primary">Exosc2</name>
    <name type="synonym">Rrp4</name>
</gene>
<dbReference type="EMBL" id="BC021485">
    <property type="protein sequence ID" value="AAH21485.1"/>
    <property type="molecule type" value="mRNA"/>
</dbReference>
<dbReference type="EMBL" id="BC021807">
    <property type="protein sequence ID" value="AAH21807.1"/>
    <property type="molecule type" value="mRNA"/>
</dbReference>
<dbReference type="CCDS" id="CCDS15900.1"/>
<dbReference type="RefSeq" id="NP_659135.1">
    <property type="nucleotide sequence ID" value="NM_144886.3"/>
</dbReference>
<dbReference type="SMR" id="Q8VBV3"/>
<dbReference type="BioGRID" id="230671">
    <property type="interactions" value="3"/>
</dbReference>
<dbReference type="ComplexPortal" id="CPX-594">
    <property type="entry name" value="Nuclear exosome complex, Dis3-Exosc10 variant"/>
</dbReference>
<dbReference type="ComplexPortal" id="CPX-595">
    <property type="entry name" value="Nucleolar exosome complex, Exosc10 variant"/>
</dbReference>
<dbReference type="ComplexPortal" id="CPX-596">
    <property type="entry name" value="Cytoplasmic exosome complex, Dis3l variant"/>
</dbReference>
<dbReference type="ComplexPortal" id="CPX-598">
    <property type="entry name" value="Exosome complex, Dis3 variant"/>
</dbReference>
<dbReference type="ComplexPortal" id="CPX-601">
    <property type="entry name" value="Cytoplasmic exosome complex, Dis3l-Exosc10 variant"/>
</dbReference>
<dbReference type="FunCoup" id="Q8VBV3">
    <property type="interactions" value="3836"/>
</dbReference>
<dbReference type="IntAct" id="Q8VBV3">
    <property type="interactions" value="1"/>
</dbReference>
<dbReference type="STRING" id="10090.ENSMUSP00000043519"/>
<dbReference type="GlyGen" id="Q8VBV3">
    <property type="glycosylation" value="1 site"/>
</dbReference>
<dbReference type="iPTMnet" id="Q8VBV3"/>
<dbReference type="PhosphoSitePlus" id="Q8VBV3"/>
<dbReference type="PaxDb" id="10090-ENSMUSP00000043519"/>
<dbReference type="ProteomicsDB" id="267673"/>
<dbReference type="Pumba" id="Q8VBV3"/>
<dbReference type="Antibodypedia" id="17999">
    <property type="antibodies" value="183 antibodies from 29 providers"/>
</dbReference>
<dbReference type="DNASU" id="227715"/>
<dbReference type="Ensembl" id="ENSMUST00000038474.14">
    <property type="protein sequence ID" value="ENSMUSP00000043519.8"/>
    <property type="gene ID" value="ENSMUSG00000039356.16"/>
</dbReference>
<dbReference type="GeneID" id="227715"/>
<dbReference type="KEGG" id="mmu:227715"/>
<dbReference type="UCSC" id="uc008jdy.1">
    <property type="organism name" value="mouse"/>
</dbReference>
<dbReference type="AGR" id="MGI:2385133"/>
<dbReference type="CTD" id="23404"/>
<dbReference type="MGI" id="MGI:2385133">
    <property type="gene designation" value="Exosc2"/>
</dbReference>
<dbReference type="VEuPathDB" id="HostDB:ENSMUSG00000039356"/>
<dbReference type="eggNOG" id="KOG3013">
    <property type="taxonomic scope" value="Eukaryota"/>
</dbReference>
<dbReference type="GeneTree" id="ENSGT00940000153596"/>
<dbReference type="HOGENOM" id="CLU_034114_3_1_1"/>
<dbReference type="InParanoid" id="Q8VBV3"/>
<dbReference type="OMA" id="GVNGFIW"/>
<dbReference type="OrthoDB" id="1650at2759"/>
<dbReference type="PhylomeDB" id="Q8VBV3"/>
<dbReference type="TreeFam" id="TF105623"/>
<dbReference type="Reactome" id="R-MMU-429958">
    <property type="pathway name" value="mRNA decay by 3' to 5' exoribonuclease"/>
</dbReference>
<dbReference type="Reactome" id="R-MMU-450385">
    <property type="pathway name" value="Butyrate Response Factor 1 (BRF1) binds and destabilizes mRNA"/>
</dbReference>
<dbReference type="Reactome" id="R-MMU-450513">
    <property type="pathway name" value="Tristetraprolin (TTP, ZFP36) binds and destabilizes mRNA"/>
</dbReference>
<dbReference type="Reactome" id="R-MMU-450604">
    <property type="pathway name" value="KSRP (KHSRP) binds and destabilizes mRNA"/>
</dbReference>
<dbReference type="Reactome" id="R-MMU-6791226">
    <property type="pathway name" value="Major pathway of rRNA processing in the nucleolus and cytosol"/>
</dbReference>
<dbReference type="BioGRID-ORCS" id="227715">
    <property type="hits" value="30 hits in 72 CRISPR screens"/>
</dbReference>
<dbReference type="ChiTaRS" id="Exosc2">
    <property type="organism name" value="mouse"/>
</dbReference>
<dbReference type="PRO" id="PR:Q8VBV3"/>
<dbReference type="Proteomes" id="UP000000589">
    <property type="component" value="Chromosome 2"/>
</dbReference>
<dbReference type="RNAct" id="Q8VBV3">
    <property type="molecule type" value="protein"/>
</dbReference>
<dbReference type="Bgee" id="ENSMUSG00000039356">
    <property type="expression patterns" value="Expressed in epiblast cell in embryo and 202 other cell types or tissues"/>
</dbReference>
<dbReference type="ExpressionAtlas" id="Q8VBV3">
    <property type="expression patterns" value="baseline and differential"/>
</dbReference>
<dbReference type="GO" id="GO:0000177">
    <property type="term" value="C:cytoplasmic exosome (RNase complex)"/>
    <property type="evidence" value="ECO:0000303"/>
    <property type="project" value="ComplexPortal"/>
</dbReference>
<dbReference type="GO" id="GO:0005829">
    <property type="term" value="C:cytosol"/>
    <property type="evidence" value="ECO:0000266"/>
    <property type="project" value="ComplexPortal"/>
</dbReference>
<dbReference type="GO" id="GO:0000178">
    <property type="term" value="C:exosome (RNase complex)"/>
    <property type="evidence" value="ECO:0000250"/>
    <property type="project" value="UniProtKB"/>
</dbReference>
<dbReference type="GO" id="GO:0000176">
    <property type="term" value="C:nuclear exosome (RNase complex)"/>
    <property type="evidence" value="ECO:0000303"/>
    <property type="project" value="ComplexPortal"/>
</dbReference>
<dbReference type="GO" id="GO:0101019">
    <property type="term" value="C:nucleolar exosome (RNase complex)"/>
    <property type="evidence" value="ECO:0000303"/>
    <property type="project" value="ComplexPortal"/>
</dbReference>
<dbReference type="GO" id="GO:0005730">
    <property type="term" value="C:nucleolus"/>
    <property type="evidence" value="ECO:0000266"/>
    <property type="project" value="ComplexPortal"/>
</dbReference>
<dbReference type="GO" id="GO:0005654">
    <property type="term" value="C:nucleoplasm"/>
    <property type="evidence" value="ECO:0007669"/>
    <property type="project" value="Ensembl"/>
</dbReference>
<dbReference type="GO" id="GO:0005634">
    <property type="term" value="C:nucleus"/>
    <property type="evidence" value="ECO:0000266"/>
    <property type="project" value="ComplexPortal"/>
</dbReference>
<dbReference type="GO" id="GO:0003723">
    <property type="term" value="F:RNA binding"/>
    <property type="evidence" value="ECO:0007669"/>
    <property type="project" value="UniProtKB-KW"/>
</dbReference>
<dbReference type="GO" id="GO:0030307">
    <property type="term" value="P:positive regulation of cell growth"/>
    <property type="evidence" value="ECO:0007669"/>
    <property type="project" value="Ensembl"/>
</dbReference>
<dbReference type="GO" id="GO:0006401">
    <property type="term" value="P:RNA catabolic process"/>
    <property type="evidence" value="ECO:0000266"/>
    <property type="project" value="ComplexPortal"/>
</dbReference>
<dbReference type="GO" id="GO:0006396">
    <property type="term" value="P:RNA processing"/>
    <property type="evidence" value="ECO:0000266"/>
    <property type="project" value="ComplexPortal"/>
</dbReference>
<dbReference type="GO" id="GO:0006364">
    <property type="term" value="P:rRNA processing"/>
    <property type="evidence" value="ECO:0007669"/>
    <property type="project" value="UniProtKB-KW"/>
</dbReference>
<dbReference type="CDD" id="cd22525">
    <property type="entry name" value="KH-I_Rrp4_eukar"/>
    <property type="match status" value="1"/>
</dbReference>
<dbReference type="CDD" id="cd05789">
    <property type="entry name" value="S1_Rrp4"/>
    <property type="match status" value="1"/>
</dbReference>
<dbReference type="FunFam" id="2.40.50.100:FF:000022">
    <property type="entry name" value="Exosome complex component RRP4"/>
    <property type="match status" value="1"/>
</dbReference>
<dbReference type="FunFam" id="2.40.50.140:FF:000038">
    <property type="entry name" value="Exosome complex component RRP4"/>
    <property type="match status" value="1"/>
</dbReference>
<dbReference type="Gene3D" id="2.40.50.100">
    <property type="match status" value="1"/>
</dbReference>
<dbReference type="Gene3D" id="2.40.50.140">
    <property type="entry name" value="Nucleic acid-binding proteins"/>
    <property type="match status" value="1"/>
</dbReference>
<dbReference type="InterPro" id="IPR025721">
    <property type="entry name" value="Exosome_cplx_N_dom"/>
</dbReference>
<dbReference type="InterPro" id="IPR026699">
    <property type="entry name" value="Exosome_RNA_bind1/RRP40/RRP4"/>
</dbReference>
<dbReference type="InterPro" id="IPR004088">
    <property type="entry name" value="KH_dom_type_1"/>
</dbReference>
<dbReference type="InterPro" id="IPR036612">
    <property type="entry name" value="KH_dom_type_1_sf"/>
</dbReference>
<dbReference type="InterPro" id="IPR012340">
    <property type="entry name" value="NA-bd_OB-fold"/>
</dbReference>
<dbReference type="InterPro" id="IPR048565">
    <property type="entry name" value="RRP4_S1"/>
</dbReference>
<dbReference type="PANTHER" id="PTHR21321:SF4">
    <property type="entry name" value="EXOSOME COMPLEX COMPONENT RRP4"/>
    <property type="match status" value="1"/>
</dbReference>
<dbReference type="PANTHER" id="PTHR21321">
    <property type="entry name" value="PNAS-3 RELATED"/>
    <property type="match status" value="1"/>
</dbReference>
<dbReference type="Pfam" id="PF14382">
    <property type="entry name" value="ECR1_N"/>
    <property type="match status" value="1"/>
</dbReference>
<dbReference type="Pfam" id="PF15985">
    <property type="entry name" value="KH_6"/>
    <property type="match status" value="1"/>
</dbReference>
<dbReference type="Pfam" id="PF21266">
    <property type="entry name" value="RRP4_S1"/>
    <property type="match status" value="1"/>
</dbReference>
<dbReference type="SUPFAM" id="SSF54791">
    <property type="entry name" value="Eukaryotic type KH-domain (KH-domain type I)"/>
    <property type="match status" value="1"/>
</dbReference>
<dbReference type="SUPFAM" id="SSF50249">
    <property type="entry name" value="Nucleic acid-binding proteins"/>
    <property type="match status" value="1"/>
</dbReference>
<dbReference type="SUPFAM" id="SSF110324">
    <property type="entry name" value="Ribosomal L27 protein-like"/>
    <property type="match status" value="1"/>
</dbReference>
<sequence length="293" mass="32632">MALEMRLPKARKPLSESLGRDSKKHLVVPGDTITTDTGFMRGHGTYMGEEKLIASVAGSVERVNKLICVKALKTRYNGEVGDIVVGRITEVQQKRWKVETNSRLDSVLLLSSMNLPGGELRRRSAEDELAMRGFLQEGDLISAEVQAVFSDGAVSLHTRSLKYGKLGQGVLVQVSPSLVKRQKTHFHDLPCGASVILGNNGFIWIYPTPEHKDEDAGGFIANLEPVALSDREVISRLRNCVVLLVTQRMMLFDTSILYCYEASLAHQIKDILKPEVMEEIMLETRQRLLDQEG</sequence>
<protein>
    <recommendedName>
        <fullName>Exosome complex component RRP4</fullName>
    </recommendedName>
    <alternativeName>
        <fullName>Exosome component 2</fullName>
    </alternativeName>
    <alternativeName>
        <fullName>Ribosomal RNA-processing protein 4</fullName>
    </alternativeName>
</protein>
<accession>Q8VBV3</accession>